<name>CLPP_STRP7</name>
<gene>
    <name evidence="1" type="primary">clpP</name>
    <name type="ordered locus">SP70585_0792</name>
</gene>
<sequence>MIPVVIEQTSRGERSYDIYSRLLKDRIIMLTGPVEDSMANSVIAQLLFLDAQDSTKDIYLYVNTPGGSVSAGLAIVDTMNFIKADVQTIVMGMAASMGTVIASSGAKGKRFMLPNAEYMIHQPMGGTGGGTQQTDMAIAAEHLLKTRNTLEKILAENSGQSMEKVHADAERDNWMSAQETLEYGFIDEIMANNSLN</sequence>
<keyword id="KW-0963">Cytoplasm</keyword>
<keyword id="KW-0378">Hydrolase</keyword>
<keyword id="KW-0645">Protease</keyword>
<keyword id="KW-0720">Serine protease</keyword>
<comment type="function">
    <text evidence="1">Cleaves peptides in various proteins in a process that requires ATP hydrolysis. Has a chymotrypsin-like activity. Plays a major role in the degradation of misfolded proteins.</text>
</comment>
<comment type="catalytic activity">
    <reaction evidence="1">
        <text>Hydrolysis of proteins to small peptides in the presence of ATP and magnesium. alpha-casein is the usual test substrate. In the absence of ATP, only oligopeptides shorter than five residues are hydrolyzed (such as succinyl-Leu-Tyr-|-NHMec, and Leu-Tyr-Leu-|-Tyr-Trp, in which cleavage of the -Tyr-|-Leu- and -Tyr-|-Trp bonds also occurs).</text>
        <dbReference type="EC" id="3.4.21.92"/>
    </reaction>
</comment>
<comment type="subunit">
    <text evidence="1">Fourteen ClpP subunits assemble into 2 heptameric rings which stack back to back to give a disk-like structure with a central cavity, resembling the structure of eukaryotic proteasomes.</text>
</comment>
<comment type="subcellular location">
    <subcellularLocation>
        <location evidence="1">Cytoplasm</location>
    </subcellularLocation>
</comment>
<comment type="similarity">
    <text evidence="1">Belongs to the peptidase S14 family.</text>
</comment>
<proteinExistence type="inferred from homology"/>
<dbReference type="EC" id="3.4.21.92" evidence="1"/>
<dbReference type="EMBL" id="CP000918">
    <property type="protein sequence ID" value="ACO16977.1"/>
    <property type="molecule type" value="Genomic_DNA"/>
</dbReference>
<dbReference type="RefSeq" id="WP_000613481.1">
    <property type="nucleotide sequence ID" value="NC_012468.1"/>
</dbReference>
<dbReference type="SMR" id="C1C691"/>
<dbReference type="MEROPS" id="S14.001"/>
<dbReference type="KEGG" id="snm:SP70585_0792"/>
<dbReference type="HOGENOM" id="CLU_058707_3_2_9"/>
<dbReference type="Proteomes" id="UP000002211">
    <property type="component" value="Chromosome"/>
</dbReference>
<dbReference type="GO" id="GO:0005737">
    <property type="term" value="C:cytoplasm"/>
    <property type="evidence" value="ECO:0007669"/>
    <property type="project" value="UniProtKB-SubCell"/>
</dbReference>
<dbReference type="GO" id="GO:0009368">
    <property type="term" value="C:endopeptidase Clp complex"/>
    <property type="evidence" value="ECO:0007669"/>
    <property type="project" value="TreeGrafter"/>
</dbReference>
<dbReference type="GO" id="GO:0004176">
    <property type="term" value="F:ATP-dependent peptidase activity"/>
    <property type="evidence" value="ECO:0007669"/>
    <property type="project" value="InterPro"/>
</dbReference>
<dbReference type="GO" id="GO:0051117">
    <property type="term" value="F:ATPase binding"/>
    <property type="evidence" value="ECO:0007669"/>
    <property type="project" value="TreeGrafter"/>
</dbReference>
<dbReference type="GO" id="GO:0004252">
    <property type="term" value="F:serine-type endopeptidase activity"/>
    <property type="evidence" value="ECO:0007669"/>
    <property type="project" value="UniProtKB-UniRule"/>
</dbReference>
<dbReference type="GO" id="GO:0006515">
    <property type="term" value="P:protein quality control for misfolded or incompletely synthesized proteins"/>
    <property type="evidence" value="ECO:0007669"/>
    <property type="project" value="TreeGrafter"/>
</dbReference>
<dbReference type="CDD" id="cd07017">
    <property type="entry name" value="S14_ClpP_2"/>
    <property type="match status" value="1"/>
</dbReference>
<dbReference type="FunFam" id="3.90.226.10:FF:000014">
    <property type="entry name" value="ATP-dependent Clp protease proteolytic subunit"/>
    <property type="match status" value="1"/>
</dbReference>
<dbReference type="Gene3D" id="3.90.226.10">
    <property type="entry name" value="2-enoyl-CoA Hydratase, Chain A, domain 1"/>
    <property type="match status" value="1"/>
</dbReference>
<dbReference type="HAMAP" id="MF_00444">
    <property type="entry name" value="ClpP"/>
    <property type="match status" value="1"/>
</dbReference>
<dbReference type="InterPro" id="IPR001907">
    <property type="entry name" value="ClpP"/>
</dbReference>
<dbReference type="InterPro" id="IPR029045">
    <property type="entry name" value="ClpP/crotonase-like_dom_sf"/>
</dbReference>
<dbReference type="InterPro" id="IPR023562">
    <property type="entry name" value="ClpP/TepA"/>
</dbReference>
<dbReference type="InterPro" id="IPR033135">
    <property type="entry name" value="ClpP_His_AS"/>
</dbReference>
<dbReference type="InterPro" id="IPR018215">
    <property type="entry name" value="ClpP_Ser_AS"/>
</dbReference>
<dbReference type="NCBIfam" id="NF001368">
    <property type="entry name" value="PRK00277.1"/>
    <property type="match status" value="1"/>
</dbReference>
<dbReference type="NCBIfam" id="NF009205">
    <property type="entry name" value="PRK12553.1"/>
    <property type="match status" value="1"/>
</dbReference>
<dbReference type="PANTHER" id="PTHR10381">
    <property type="entry name" value="ATP-DEPENDENT CLP PROTEASE PROTEOLYTIC SUBUNIT"/>
    <property type="match status" value="1"/>
</dbReference>
<dbReference type="PANTHER" id="PTHR10381:SF70">
    <property type="entry name" value="ATP-DEPENDENT CLP PROTEASE PROTEOLYTIC SUBUNIT"/>
    <property type="match status" value="1"/>
</dbReference>
<dbReference type="Pfam" id="PF00574">
    <property type="entry name" value="CLP_protease"/>
    <property type="match status" value="1"/>
</dbReference>
<dbReference type="PRINTS" id="PR00127">
    <property type="entry name" value="CLPPROTEASEP"/>
</dbReference>
<dbReference type="SUPFAM" id="SSF52096">
    <property type="entry name" value="ClpP/crotonase"/>
    <property type="match status" value="1"/>
</dbReference>
<dbReference type="PROSITE" id="PS00382">
    <property type="entry name" value="CLP_PROTEASE_HIS"/>
    <property type="match status" value="1"/>
</dbReference>
<dbReference type="PROSITE" id="PS00381">
    <property type="entry name" value="CLP_PROTEASE_SER"/>
    <property type="match status" value="1"/>
</dbReference>
<reference key="1">
    <citation type="journal article" date="2010" name="Genome Biol.">
        <title>Structure and dynamics of the pan-genome of Streptococcus pneumoniae and closely related species.</title>
        <authorList>
            <person name="Donati C."/>
            <person name="Hiller N.L."/>
            <person name="Tettelin H."/>
            <person name="Muzzi A."/>
            <person name="Croucher N.J."/>
            <person name="Angiuoli S.V."/>
            <person name="Oggioni M."/>
            <person name="Dunning Hotopp J.C."/>
            <person name="Hu F.Z."/>
            <person name="Riley D.R."/>
            <person name="Covacci A."/>
            <person name="Mitchell T.J."/>
            <person name="Bentley S.D."/>
            <person name="Kilian M."/>
            <person name="Ehrlich G.D."/>
            <person name="Rappuoli R."/>
            <person name="Moxon E.R."/>
            <person name="Masignani V."/>
        </authorList>
    </citation>
    <scope>NUCLEOTIDE SEQUENCE [LARGE SCALE GENOMIC DNA]</scope>
    <source>
        <strain>70585</strain>
    </source>
</reference>
<protein>
    <recommendedName>
        <fullName evidence="1">ATP-dependent Clp protease proteolytic subunit</fullName>
        <ecNumber evidence="1">3.4.21.92</ecNumber>
    </recommendedName>
    <alternativeName>
        <fullName evidence="1">Endopeptidase Clp</fullName>
    </alternativeName>
</protein>
<accession>C1C691</accession>
<evidence type="ECO:0000255" key="1">
    <source>
        <dbReference type="HAMAP-Rule" id="MF_00444"/>
    </source>
</evidence>
<organism>
    <name type="scientific">Streptococcus pneumoniae (strain 70585)</name>
    <dbReference type="NCBI Taxonomy" id="488221"/>
    <lineage>
        <taxon>Bacteria</taxon>
        <taxon>Bacillati</taxon>
        <taxon>Bacillota</taxon>
        <taxon>Bacilli</taxon>
        <taxon>Lactobacillales</taxon>
        <taxon>Streptococcaceae</taxon>
        <taxon>Streptococcus</taxon>
    </lineage>
</organism>
<feature type="chain" id="PRO_1000135166" description="ATP-dependent Clp protease proteolytic subunit">
    <location>
        <begin position="1"/>
        <end position="196"/>
    </location>
</feature>
<feature type="active site" description="Nucleophile" evidence="1">
    <location>
        <position position="96"/>
    </location>
</feature>
<feature type="active site" evidence="1">
    <location>
        <position position="121"/>
    </location>
</feature>